<dbReference type="EMBL" id="X77953">
    <property type="protein sequence ID" value="CAA54918.1"/>
    <property type="molecule type" value="mRNA"/>
</dbReference>
<dbReference type="EMBL" id="BC058452">
    <property type="protein sequence ID" value="AAH58452.1"/>
    <property type="molecule type" value="mRNA"/>
</dbReference>
<dbReference type="PIR" id="JC2234">
    <property type="entry name" value="JC2234"/>
</dbReference>
<dbReference type="RefSeq" id="NP_446434.1">
    <property type="nucleotide sequence ID" value="NM_053982.1"/>
</dbReference>
<dbReference type="RefSeq" id="XP_006230159.1">
    <property type="nucleotide sequence ID" value="XM_006230097.3"/>
</dbReference>
<dbReference type="RefSeq" id="XP_006230160.1">
    <property type="nucleotide sequence ID" value="XM_006230098.4"/>
</dbReference>
<dbReference type="RefSeq" id="XP_038968660.1">
    <property type="nucleotide sequence ID" value="XM_039112732.1"/>
</dbReference>
<dbReference type="RefSeq" id="XP_038968702.1">
    <property type="nucleotide sequence ID" value="XM_039112774.2"/>
</dbReference>
<dbReference type="SMR" id="P62246"/>
<dbReference type="BioGRID" id="250650">
    <property type="interactions" value="3"/>
</dbReference>
<dbReference type="FunCoup" id="P62246">
    <property type="interactions" value="2287"/>
</dbReference>
<dbReference type="IntAct" id="P62246">
    <property type="interactions" value="3"/>
</dbReference>
<dbReference type="MINT" id="P62246"/>
<dbReference type="STRING" id="10116.ENSRNOP00000075906"/>
<dbReference type="PhosphoSitePlus" id="P62246"/>
<dbReference type="jPOST" id="P62246"/>
<dbReference type="PaxDb" id="10116-ENSRNOP00000024678"/>
<dbReference type="Ensembl" id="ENSRNOT00000092282.2">
    <property type="protein sequence ID" value="ENSRNOP00000075906.1"/>
    <property type="gene ID" value="ENSRNOG00000018320.7"/>
</dbReference>
<dbReference type="GeneID" id="117053"/>
<dbReference type="KEGG" id="rno:117053"/>
<dbReference type="UCSC" id="RGD:619939">
    <property type="organism name" value="rat"/>
</dbReference>
<dbReference type="AGR" id="RGD:619939"/>
<dbReference type="CTD" id="6210"/>
<dbReference type="RGD" id="619939">
    <property type="gene designation" value="Rps15a"/>
</dbReference>
<dbReference type="VEuPathDB" id="HostDB:ENSRNOG00000067600"/>
<dbReference type="eggNOG" id="KOG1754">
    <property type="taxonomic scope" value="Eukaryota"/>
</dbReference>
<dbReference type="GeneTree" id="ENSGT00950000183198"/>
<dbReference type="HOGENOM" id="CLU_098428_1_1_1"/>
<dbReference type="InParanoid" id="P62246"/>
<dbReference type="OrthoDB" id="10250260at2759"/>
<dbReference type="PhylomeDB" id="P62246"/>
<dbReference type="TreeFam" id="TF300067"/>
<dbReference type="Reactome" id="R-RNO-156827">
    <property type="pathway name" value="L13a-mediated translational silencing of Ceruloplasmin expression"/>
</dbReference>
<dbReference type="Reactome" id="R-RNO-1799339">
    <property type="pathway name" value="SRP-dependent cotranslational protein targeting to membrane"/>
</dbReference>
<dbReference type="Reactome" id="R-RNO-6791226">
    <property type="pathway name" value="Major pathway of rRNA processing in the nucleolus and cytosol"/>
</dbReference>
<dbReference type="Reactome" id="R-RNO-72649">
    <property type="pathway name" value="Translation initiation complex formation"/>
</dbReference>
<dbReference type="Reactome" id="R-RNO-72689">
    <property type="pathway name" value="Formation of a pool of free 40S subunits"/>
</dbReference>
<dbReference type="Reactome" id="R-RNO-72695">
    <property type="pathway name" value="Formation of the ternary complex, and subsequently, the 43S complex"/>
</dbReference>
<dbReference type="Reactome" id="R-RNO-72702">
    <property type="pathway name" value="Ribosomal scanning and start codon recognition"/>
</dbReference>
<dbReference type="Reactome" id="R-RNO-72706">
    <property type="pathway name" value="GTP hydrolysis and joining of the 60S ribosomal subunit"/>
</dbReference>
<dbReference type="Reactome" id="R-RNO-975956">
    <property type="pathway name" value="Nonsense Mediated Decay (NMD) independent of the Exon Junction Complex (EJC)"/>
</dbReference>
<dbReference type="Reactome" id="R-RNO-975957">
    <property type="pathway name" value="Nonsense Mediated Decay (NMD) enhanced by the Exon Junction Complex (EJC)"/>
</dbReference>
<dbReference type="PRO" id="PR:P62246"/>
<dbReference type="Proteomes" id="UP000002494">
    <property type="component" value="Chromosome 1"/>
</dbReference>
<dbReference type="Bgee" id="ENSRNOG00000018320">
    <property type="expression patterns" value="Expressed in ovary and 19 other cell types or tissues"/>
</dbReference>
<dbReference type="GO" id="GO:0005737">
    <property type="term" value="C:cytoplasm"/>
    <property type="evidence" value="ECO:0000266"/>
    <property type="project" value="RGD"/>
</dbReference>
<dbReference type="GO" id="GO:0022626">
    <property type="term" value="C:cytosolic ribosome"/>
    <property type="evidence" value="ECO:0000266"/>
    <property type="project" value="RGD"/>
</dbReference>
<dbReference type="GO" id="GO:0022627">
    <property type="term" value="C:cytosolic small ribosomal subunit"/>
    <property type="evidence" value="ECO:0000314"/>
    <property type="project" value="RGD"/>
</dbReference>
<dbReference type="GO" id="GO:0005730">
    <property type="term" value="C:nucleolus"/>
    <property type="evidence" value="ECO:0007669"/>
    <property type="project" value="UniProtKB-SubCell"/>
</dbReference>
<dbReference type="GO" id="GO:0032040">
    <property type="term" value="C:small-subunit processome"/>
    <property type="evidence" value="ECO:0000250"/>
    <property type="project" value="UniProtKB"/>
</dbReference>
<dbReference type="GO" id="GO:0045202">
    <property type="term" value="C:synapse"/>
    <property type="evidence" value="ECO:0000266"/>
    <property type="project" value="RGD"/>
</dbReference>
<dbReference type="GO" id="GO:0003735">
    <property type="term" value="F:structural constituent of ribosome"/>
    <property type="evidence" value="ECO:0000266"/>
    <property type="project" value="RGD"/>
</dbReference>
<dbReference type="GO" id="GO:0045787">
    <property type="term" value="P:positive regulation of cell cycle"/>
    <property type="evidence" value="ECO:0000266"/>
    <property type="project" value="RGD"/>
</dbReference>
<dbReference type="GO" id="GO:0008284">
    <property type="term" value="P:positive regulation of cell population proliferation"/>
    <property type="evidence" value="ECO:0000266"/>
    <property type="project" value="RGD"/>
</dbReference>
<dbReference type="GO" id="GO:0009615">
    <property type="term" value="P:response to virus"/>
    <property type="evidence" value="ECO:0000266"/>
    <property type="project" value="RGD"/>
</dbReference>
<dbReference type="GO" id="GO:0042274">
    <property type="term" value="P:ribosomal small subunit biogenesis"/>
    <property type="evidence" value="ECO:0000250"/>
    <property type="project" value="UniProtKB"/>
</dbReference>
<dbReference type="GO" id="GO:0006412">
    <property type="term" value="P:translation"/>
    <property type="evidence" value="ECO:0007669"/>
    <property type="project" value="InterPro"/>
</dbReference>
<dbReference type="FunFam" id="3.30.1370.30:FF:000001">
    <property type="entry name" value="40S ribosomal protein S15a"/>
    <property type="match status" value="1"/>
</dbReference>
<dbReference type="FunFam" id="3.30.1490.10:FF:000002">
    <property type="entry name" value="40S ribosomal protein S15a"/>
    <property type="match status" value="1"/>
</dbReference>
<dbReference type="Gene3D" id="3.30.1370.30">
    <property type="match status" value="1"/>
</dbReference>
<dbReference type="Gene3D" id="3.30.1490.10">
    <property type="match status" value="1"/>
</dbReference>
<dbReference type="HAMAP" id="MF_01302_A">
    <property type="entry name" value="Ribosomal_uS8_A"/>
    <property type="match status" value="1"/>
</dbReference>
<dbReference type="InterPro" id="IPR000630">
    <property type="entry name" value="Ribosomal_uS8"/>
</dbReference>
<dbReference type="InterPro" id="IPR047863">
    <property type="entry name" value="Ribosomal_uS8_CS"/>
</dbReference>
<dbReference type="InterPro" id="IPR035987">
    <property type="entry name" value="Ribosomal_uS8_sf"/>
</dbReference>
<dbReference type="NCBIfam" id="NF003115">
    <property type="entry name" value="PRK04034.1"/>
    <property type="match status" value="1"/>
</dbReference>
<dbReference type="PANTHER" id="PTHR11758">
    <property type="entry name" value="40S RIBOSOMAL PROTEIN S15A"/>
    <property type="match status" value="1"/>
</dbReference>
<dbReference type="Pfam" id="PF00410">
    <property type="entry name" value="Ribosomal_S8"/>
    <property type="match status" value="1"/>
</dbReference>
<dbReference type="SUPFAM" id="SSF56047">
    <property type="entry name" value="Ribosomal protein S8"/>
    <property type="match status" value="1"/>
</dbReference>
<dbReference type="PROSITE" id="PS00053">
    <property type="entry name" value="RIBOSOMAL_S8"/>
    <property type="match status" value="1"/>
</dbReference>
<reference key="1">
    <citation type="journal article" date="1994" name="Biochem. Biophys. Res. Commun.">
        <title>The primary structure of rat ribosomal protein S15a.</title>
        <authorList>
            <person name="Chan Y.-L."/>
            <person name="Olvera J."/>
            <person name="Paz V."/>
            <person name="Wool I.G."/>
        </authorList>
    </citation>
    <scope>NUCLEOTIDE SEQUENCE [MRNA]</scope>
    <scope>PROTEIN SEQUENCE OF 2-38</scope>
    <source>
        <strain>Sprague-Dawley</strain>
        <tissue>Liver</tissue>
    </source>
</reference>
<reference key="2">
    <citation type="journal article" date="2004" name="Genome Res.">
        <title>The status, quality, and expansion of the NIH full-length cDNA project: the Mammalian Gene Collection (MGC).</title>
        <authorList>
            <consortium name="The MGC Project Team"/>
        </authorList>
    </citation>
    <scope>NUCLEOTIDE SEQUENCE [LARGE SCALE MRNA]</scope>
    <source>
        <tissue>Pituitary</tissue>
    </source>
</reference>
<proteinExistence type="evidence at protein level"/>
<feature type="initiator methionine" description="Removed" evidence="3">
    <location>
        <position position="1"/>
    </location>
</feature>
<feature type="chain" id="PRO_0000126604" description="Small ribosomal subunit protein uS8">
    <location>
        <begin position="2"/>
        <end position="130"/>
    </location>
</feature>
<feature type="modified residue" description="N6-succinyllysine" evidence="2">
    <location>
        <position position="88"/>
    </location>
</feature>
<sequence>MVRMNVLADALKSINNAEKRGKRQVLIRPCSKVIVRFLTVMMKHGYIGEFEIIDDHRAGKIVVNLTGRLNKCGVISPRFDVQLKDLEKWQNNLLPSRQFGFIVLTTSAGIMDHEEARRKHTGGKILGFFF</sequence>
<comment type="function">
    <text evidence="1">Component of the small ribosomal subunit. Part of the small subunit (SSU) processome, first precursor of the small eukaryotic ribosomal subunit. During the assembly of the SSU processome in the nucleolus, many ribosome biogenesis factors, an RNA chaperone and ribosomal proteins associate with the nascent pre-rRNA and work in concert to generate RNA folding, modifications, rearrangements and cleavage as well as targeted degradation of pre-ribosomal RNA by the RNA exosome. Required for proper erythropoiesis.</text>
</comment>
<comment type="subunit">
    <text evidence="1">Component of the 40S ribosomal subunit. Part of the small subunit (SSU) processome, composed of more than 70 proteins and the RNA chaperone small nucleolar RNA (snoRNA) U3.</text>
</comment>
<comment type="subcellular location">
    <subcellularLocation>
        <location evidence="1">Cytoplasm</location>
    </subcellularLocation>
    <subcellularLocation>
        <location evidence="1">Nucleus</location>
        <location evidence="1">Nucleolus</location>
    </subcellularLocation>
</comment>
<comment type="similarity">
    <text evidence="4">Belongs to the universal ribosomal protein uS8 family.</text>
</comment>
<evidence type="ECO:0000250" key="1">
    <source>
        <dbReference type="UniProtKB" id="P62244"/>
    </source>
</evidence>
<evidence type="ECO:0000250" key="2">
    <source>
        <dbReference type="UniProtKB" id="P62245"/>
    </source>
</evidence>
<evidence type="ECO:0000269" key="3">
    <source>
    </source>
</evidence>
<evidence type="ECO:0000305" key="4"/>
<protein>
    <recommendedName>
        <fullName evidence="4">Small ribosomal subunit protein uS8</fullName>
    </recommendedName>
    <alternativeName>
        <fullName>40S ribosomal protein S15a</fullName>
    </alternativeName>
</protein>
<gene>
    <name type="primary">Rps15a</name>
</gene>
<keyword id="KW-0963">Cytoplasm</keyword>
<keyword id="KW-0903">Direct protein sequencing</keyword>
<keyword id="KW-0539">Nucleus</keyword>
<keyword id="KW-1185">Reference proteome</keyword>
<keyword id="KW-0687">Ribonucleoprotein</keyword>
<keyword id="KW-0689">Ribosomal protein</keyword>
<accession>P62246</accession>
<accession>P39027</accession>
<accession>P39031</accession>
<accession>Q8C023</accession>
<accession>Q9BV24</accession>
<name>RS15A_RAT</name>
<organism>
    <name type="scientific">Rattus norvegicus</name>
    <name type="common">Rat</name>
    <dbReference type="NCBI Taxonomy" id="10116"/>
    <lineage>
        <taxon>Eukaryota</taxon>
        <taxon>Metazoa</taxon>
        <taxon>Chordata</taxon>
        <taxon>Craniata</taxon>
        <taxon>Vertebrata</taxon>
        <taxon>Euteleostomi</taxon>
        <taxon>Mammalia</taxon>
        <taxon>Eutheria</taxon>
        <taxon>Euarchontoglires</taxon>
        <taxon>Glires</taxon>
        <taxon>Rodentia</taxon>
        <taxon>Myomorpha</taxon>
        <taxon>Muroidea</taxon>
        <taxon>Muridae</taxon>
        <taxon>Murinae</taxon>
        <taxon>Rattus</taxon>
    </lineage>
</organism>